<evidence type="ECO:0000255" key="1">
    <source>
        <dbReference type="HAMAP-Rule" id="MF_00337"/>
    </source>
</evidence>
<evidence type="ECO:0000256" key="2">
    <source>
        <dbReference type="SAM" id="MobiDB-lite"/>
    </source>
</evidence>
<organism>
    <name type="scientific">Burkholderia cenocepacia (strain HI2424)</name>
    <dbReference type="NCBI Taxonomy" id="331272"/>
    <lineage>
        <taxon>Bacteria</taxon>
        <taxon>Pseudomonadati</taxon>
        <taxon>Pseudomonadota</taxon>
        <taxon>Betaproteobacteria</taxon>
        <taxon>Burkholderiales</taxon>
        <taxon>Burkholderiaceae</taxon>
        <taxon>Burkholderia</taxon>
        <taxon>Burkholderia cepacia complex</taxon>
    </lineage>
</organism>
<accession>A0AYY8</accession>
<dbReference type="EC" id="3.1.11.6" evidence="1"/>
<dbReference type="EMBL" id="CP000459">
    <property type="protein sequence ID" value="ABK10614.1"/>
    <property type="molecule type" value="Genomic_DNA"/>
</dbReference>
<dbReference type="RefSeq" id="WP_006479428.1">
    <property type="nucleotide sequence ID" value="NC_008543.1"/>
</dbReference>
<dbReference type="SMR" id="A0AYY8"/>
<dbReference type="KEGG" id="bch:Bcen2424_3877"/>
<dbReference type="HOGENOM" id="CLU_145918_2_0_4"/>
<dbReference type="GO" id="GO:0005829">
    <property type="term" value="C:cytosol"/>
    <property type="evidence" value="ECO:0007669"/>
    <property type="project" value="TreeGrafter"/>
</dbReference>
<dbReference type="GO" id="GO:0009318">
    <property type="term" value="C:exodeoxyribonuclease VII complex"/>
    <property type="evidence" value="ECO:0007669"/>
    <property type="project" value="InterPro"/>
</dbReference>
<dbReference type="GO" id="GO:0008855">
    <property type="term" value="F:exodeoxyribonuclease VII activity"/>
    <property type="evidence" value="ECO:0007669"/>
    <property type="project" value="UniProtKB-UniRule"/>
</dbReference>
<dbReference type="GO" id="GO:0006308">
    <property type="term" value="P:DNA catabolic process"/>
    <property type="evidence" value="ECO:0007669"/>
    <property type="project" value="UniProtKB-UniRule"/>
</dbReference>
<dbReference type="Gene3D" id="1.10.287.1040">
    <property type="entry name" value="Exonuclease VII, small subunit"/>
    <property type="match status" value="1"/>
</dbReference>
<dbReference type="HAMAP" id="MF_00337">
    <property type="entry name" value="Exonuc_7_S"/>
    <property type="match status" value="1"/>
</dbReference>
<dbReference type="InterPro" id="IPR003761">
    <property type="entry name" value="Exonuc_VII_S"/>
</dbReference>
<dbReference type="InterPro" id="IPR037004">
    <property type="entry name" value="Exonuc_VII_ssu_sf"/>
</dbReference>
<dbReference type="NCBIfam" id="NF002141">
    <property type="entry name" value="PRK00977.1-5"/>
    <property type="match status" value="1"/>
</dbReference>
<dbReference type="NCBIfam" id="TIGR01280">
    <property type="entry name" value="xseB"/>
    <property type="match status" value="1"/>
</dbReference>
<dbReference type="PANTHER" id="PTHR34137">
    <property type="entry name" value="EXODEOXYRIBONUCLEASE 7 SMALL SUBUNIT"/>
    <property type="match status" value="1"/>
</dbReference>
<dbReference type="PANTHER" id="PTHR34137:SF1">
    <property type="entry name" value="EXODEOXYRIBONUCLEASE 7 SMALL SUBUNIT"/>
    <property type="match status" value="1"/>
</dbReference>
<dbReference type="Pfam" id="PF02609">
    <property type="entry name" value="Exonuc_VII_S"/>
    <property type="match status" value="1"/>
</dbReference>
<dbReference type="SUPFAM" id="SSF116842">
    <property type="entry name" value="XseB-like"/>
    <property type="match status" value="1"/>
</dbReference>
<comment type="function">
    <text evidence="1">Bidirectionally degrades single-stranded DNA into large acid-insoluble oligonucleotides, which are then degraded further into small acid-soluble oligonucleotides.</text>
</comment>
<comment type="catalytic activity">
    <reaction evidence="1">
        <text>Exonucleolytic cleavage in either 5'- to 3'- or 3'- to 5'-direction to yield nucleoside 5'-phosphates.</text>
        <dbReference type="EC" id="3.1.11.6"/>
    </reaction>
</comment>
<comment type="subunit">
    <text evidence="1">Heterooligomer composed of large and small subunits.</text>
</comment>
<comment type="subcellular location">
    <subcellularLocation>
        <location evidence="1">Cytoplasm</location>
    </subcellularLocation>
</comment>
<comment type="similarity">
    <text evidence="1">Belongs to the XseB family.</text>
</comment>
<feature type="chain" id="PRO_0000303694" description="Exodeoxyribonuclease 7 small subunit">
    <location>
        <begin position="1"/>
        <end position="97"/>
    </location>
</feature>
<feature type="region of interest" description="Disordered" evidence="2">
    <location>
        <begin position="1"/>
        <end position="22"/>
    </location>
</feature>
<name>EX7S_BURCH</name>
<sequence>MAKTASPGATPPGNGTEPLPDNYEMALAELETLVARMEGGALSLEDSLAAYRRGATLVAFCQQQLEKVEQQVRVLDGATLKPLSSGTAATDGEDDDL</sequence>
<proteinExistence type="inferred from homology"/>
<protein>
    <recommendedName>
        <fullName evidence="1">Exodeoxyribonuclease 7 small subunit</fullName>
        <ecNumber evidence="1">3.1.11.6</ecNumber>
    </recommendedName>
    <alternativeName>
        <fullName evidence="1">Exodeoxyribonuclease VII small subunit</fullName>
        <shortName evidence="1">Exonuclease VII small subunit</shortName>
    </alternativeName>
</protein>
<reference key="1">
    <citation type="submission" date="2006-08" db="EMBL/GenBank/DDBJ databases">
        <title>Complete sequence of chromosome 2 of Burkholderia cenocepacia HI2424.</title>
        <authorList>
            <person name="Copeland A."/>
            <person name="Lucas S."/>
            <person name="Lapidus A."/>
            <person name="Barry K."/>
            <person name="Detter J.C."/>
            <person name="Glavina del Rio T."/>
            <person name="Hammon N."/>
            <person name="Israni S."/>
            <person name="Pitluck S."/>
            <person name="Chain P."/>
            <person name="Malfatti S."/>
            <person name="Shin M."/>
            <person name="Vergez L."/>
            <person name="Schmutz J."/>
            <person name="Larimer F."/>
            <person name="Land M."/>
            <person name="Hauser L."/>
            <person name="Kyrpides N."/>
            <person name="Kim E."/>
            <person name="LiPuma J.J."/>
            <person name="Gonzalez C.F."/>
            <person name="Konstantinidis K."/>
            <person name="Tiedje J.M."/>
            <person name="Richardson P."/>
        </authorList>
    </citation>
    <scope>NUCLEOTIDE SEQUENCE [LARGE SCALE GENOMIC DNA]</scope>
    <source>
        <strain>HI2424</strain>
    </source>
</reference>
<keyword id="KW-0963">Cytoplasm</keyword>
<keyword id="KW-0269">Exonuclease</keyword>
<keyword id="KW-0378">Hydrolase</keyword>
<keyword id="KW-0540">Nuclease</keyword>
<gene>
    <name evidence="1" type="primary">xseB</name>
    <name type="ordered locus">Bcen2424_3877</name>
</gene>